<gene>
    <name evidence="1" type="primary">rplS</name>
    <name type="ordered locus">Lxx14820</name>
</gene>
<keyword id="KW-1185">Reference proteome</keyword>
<keyword id="KW-0687">Ribonucleoprotein</keyword>
<keyword id="KW-0689">Ribosomal protein</keyword>
<sequence>MHILDQVDAASLKQDIPAFRAGDTVKVHVNIIEGSRSRVQVFQGVVIARSGEGVRETFTVRKISFQVGVERMFPVHSPVIDKIEVVTRGDVRRAKLYYLRELRGKKAKIKEKRDN</sequence>
<accession>Q6AEA5</accession>
<name>RL19_LEIXX</name>
<protein>
    <recommendedName>
        <fullName evidence="1">Large ribosomal subunit protein bL19</fullName>
    </recommendedName>
    <alternativeName>
        <fullName evidence="2">50S ribosomal protein L19</fullName>
    </alternativeName>
</protein>
<reference key="1">
    <citation type="journal article" date="2004" name="Mol. Plant Microbe Interact.">
        <title>The genome sequence of the Gram-positive sugarcane pathogen Leifsonia xyli subsp. xyli.</title>
        <authorList>
            <person name="Monteiro-Vitorello C.B."/>
            <person name="Camargo L.E.A."/>
            <person name="Van Sluys M.A."/>
            <person name="Kitajima J.P."/>
            <person name="Truffi D."/>
            <person name="do Amaral A.M."/>
            <person name="Harakava R."/>
            <person name="de Oliveira J.C.F."/>
            <person name="Wood D."/>
            <person name="de Oliveira M.C."/>
            <person name="Miyaki C.Y."/>
            <person name="Takita M.A."/>
            <person name="da Silva A.C.R."/>
            <person name="Furlan L.R."/>
            <person name="Carraro D.M."/>
            <person name="Camarotte G."/>
            <person name="Almeida N.F. Jr."/>
            <person name="Carrer H."/>
            <person name="Coutinho L.L."/>
            <person name="El-Dorry H.A."/>
            <person name="Ferro M.I.T."/>
            <person name="Gagliardi P.R."/>
            <person name="Giglioti E."/>
            <person name="Goldman M.H.S."/>
            <person name="Goldman G.H."/>
            <person name="Kimura E.T."/>
            <person name="Ferro E.S."/>
            <person name="Kuramae E.E."/>
            <person name="Lemos E.G.M."/>
            <person name="Lemos M.V.F."/>
            <person name="Mauro S.M.Z."/>
            <person name="Machado M.A."/>
            <person name="Marino C.L."/>
            <person name="Menck C.F."/>
            <person name="Nunes L.R."/>
            <person name="Oliveira R.C."/>
            <person name="Pereira G.G."/>
            <person name="Siqueira W."/>
            <person name="de Souza A.A."/>
            <person name="Tsai S.M."/>
            <person name="Zanca A.S."/>
            <person name="Simpson A.J.G."/>
            <person name="Brumbley S.M."/>
            <person name="Setubal J.C."/>
        </authorList>
    </citation>
    <scope>NUCLEOTIDE SEQUENCE [LARGE SCALE GENOMIC DNA]</scope>
    <source>
        <strain>CTCB07</strain>
    </source>
</reference>
<evidence type="ECO:0000255" key="1">
    <source>
        <dbReference type="HAMAP-Rule" id="MF_00402"/>
    </source>
</evidence>
<evidence type="ECO:0000305" key="2"/>
<comment type="function">
    <text evidence="1">This protein is located at the 30S-50S ribosomal subunit interface and may play a role in the structure and function of the aminoacyl-tRNA binding site.</text>
</comment>
<comment type="similarity">
    <text evidence="1">Belongs to the bacterial ribosomal protein bL19 family.</text>
</comment>
<feature type="chain" id="PRO_0000163474" description="Large ribosomal subunit protein bL19">
    <location>
        <begin position="1"/>
        <end position="115"/>
    </location>
</feature>
<dbReference type="EMBL" id="AE016822">
    <property type="protein sequence ID" value="AAT89291.1"/>
    <property type="molecule type" value="Genomic_DNA"/>
</dbReference>
<dbReference type="RefSeq" id="WP_011186282.1">
    <property type="nucleotide sequence ID" value="NC_006087.1"/>
</dbReference>
<dbReference type="SMR" id="Q6AEA5"/>
<dbReference type="STRING" id="281090.Lxx14820"/>
<dbReference type="KEGG" id="lxx:Lxx14820"/>
<dbReference type="eggNOG" id="COG0335">
    <property type="taxonomic scope" value="Bacteria"/>
</dbReference>
<dbReference type="HOGENOM" id="CLU_103507_2_1_11"/>
<dbReference type="Proteomes" id="UP000001306">
    <property type="component" value="Chromosome"/>
</dbReference>
<dbReference type="GO" id="GO:0022625">
    <property type="term" value="C:cytosolic large ribosomal subunit"/>
    <property type="evidence" value="ECO:0007669"/>
    <property type="project" value="TreeGrafter"/>
</dbReference>
<dbReference type="GO" id="GO:0003735">
    <property type="term" value="F:structural constituent of ribosome"/>
    <property type="evidence" value="ECO:0007669"/>
    <property type="project" value="InterPro"/>
</dbReference>
<dbReference type="GO" id="GO:0006412">
    <property type="term" value="P:translation"/>
    <property type="evidence" value="ECO:0007669"/>
    <property type="project" value="UniProtKB-UniRule"/>
</dbReference>
<dbReference type="FunFam" id="2.30.30.790:FF:000001">
    <property type="entry name" value="50S ribosomal protein L19"/>
    <property type="match status" value="1"/>
</dbReference>
<dbReference type="Gene3D" id="2.30.30.790">
    <property type="match status" value="1"/>
</dbReference>
<dbReference type="HAMAP" id="MF_00402">
    <property type="entry name" value="Ribosomal_bL19"/>
    <property type="match status" value="1"/>
</dbReference>
<dbReference type="InterPro" id="IPR001857">
    <property type="entry name" value="Ribosomal_bL19"/>
</dbReference>
<dbReference type="InterPro" id="IPR018257">
    <property type="entry name" value="Ribosomal_bL19_CS"/>
</dbReference>
<dbReference type="InterPro" id="IPR038657">
    <property type="entry name" value="Ribosomal_bL19_sf"/>
</dbReference>
<dbReference type="InterPro" id="IPR008991">
    <property type="entry name" value="Translation_prot_SH3-like_sf"/>
</dbReference>
<dbReference type="NCBIfam" id="TIGR01024">
    <property type="entry name" value="rplS_bact"/>
    <property type="match status" value="1"/>
</dbReference>
<dbReference type="PANTHER" id="PTHR15680:SF9">
    <property type="entry name" value="LARGE RIBOSOMAL SUBUNIT PROTEIN BL19M"/>
    <property type="match status" value="1"/>
</dbReference>
<dbReference type="PANTHER" id="PTHR15680">
    <property type="entry name" value="RIBOSOMAL PROTEIN L19"/>
    <property type="match status" value="1"/>
</dbReference>
<dbReference type="Pfam" id="PF01245">
    <property type="entry name" value="Ribosomal_L19"/>
    <property type="match status" value="1"/>
</dbReference>
<dbReference type="PIRSF" id="PIRSF002191">
    <property type="entry name" value="Ribosomal_L19"/>
    <property type="match status" value="1"/>
</dbReference>
<dbReference type="PRINTS" id="PR00061">
    <property type="entry name" value="RIBOSOMALL19"/>
</dbReference>
<dbReference type="SUPFAM" id="SSF50104">
    <property type="entry name" value="Translation proteins SH3-like domain"/>
    <property type="match status" value="1"/>
</dbReference>
<dbReference type="PROSITE" id="PS01015">
    <property type="entry name" value="RIBOSOMAL_L19"/>
    <property type="match status" value="1"/>
</dbReference>
<organism>
    <name type="scientific">Leifsonia xyli subsp. xyli (strain CTCB07)</name>
    <dbReference type="NCBI Taxonomy" id="281090"/>
    <lineage>
        <taxon>Bacteria</taxon>
        <taxon>Bacillati</taxon>
        <taxon>Actinomycetota</taxon>
        <taxon>Actinomycetes</taxon>
        <taxon>Micrococcales</taxon>
        <taxon>Microbacteriaceae</taxon>
        <taxon>Leifsonia</taxon>
    </lineage>
</organism>
<proteinExistence type="inferred from homology"/>